<reference evidence="8" key="1">
    <citation type="submission" date="2007-10" db="EMBL/GenBank/DDBJ databases">
        <title>Classification and functional annotation of ESTs from venom glands of Isometrus maculatus.</title>
        <authorList>
            <person name="Li W."/>
            <person name="Ma Y."/>
            <person name="Zhao R."/>
            <person name="Cao Z."/>
        </authorList>
    </citation>
    <scope>NUCLEOTIDE SEQUENCE [MRNA]</scope>
    <source>
        <tissue>Venom gland</tissue>
    </source>
</reference>
<reference key="2">
    <citation type="journal article" date="2017" name="Toxicon">
        <title>Complete de novo sequencing of antimicrobial peptides in the venom of the scorpion Isometrus maculatus.</title>
        <authorList>
            <person name="Miyashita M."/>
            <person name="Kitanaka A."/>
            <person name="Yakio M."/>
            <person name="Yamazaki Y."/>
            <person name="Nakagawa Y."/>
            <person name="Miyagawa H."/>
        </authorList>
    </citation>
    <scope>PROTEIN SEQUENCE OF 23-39</scope>
    <scope>FUNCTION</scope>
    <scope>SUBCELLULAR LOCATION</scope>
    <scope>MASS SPECTROMETRY</scope>
    <scope>IDENTIFICATION BY MASS SPECTROMETRY</scope>
    <scope>AMIDATION AT LYS-39</scope>
    <source>
        <tissue>Venom</tissue>
    </source>
</reference>
<reference key="3">
    <citation type="journal article" date="2021" name="Microb. Pathog.">
        <title>Identification of the scorpion venom-derived antimicrobial peptide Hp1404 as a new antimicrobial agent against carbapenem-resistant Acinetobacter baumannii.</title>
        <authorList>
            <person name="Luo X."/>
            <person name="Ye X."/>
            <person name="Ding L."/>
            <person name="Zhu W."/>
            <person name="Zhao Z."/>
            <person name="Luo D."/>
            <person name="Liu N."/>
            <person name="Sun L."/>
            <person name="Chen Z."/>
        </authorList>
    </citation>
    <scope>FUNCTION</scope>
    <scope>SYNTHESIS OF 23-39 (AMIDATED PEPTIDE)</scope>
</reference>
<feature type="signal peptide" evidence="1">
    <location>
        <begin position="1"/>
        <end position="22"/>
    </location>
</feature>
<feature type="peptide" id="PRO_0000442987" description="Peptide Im-4" evidence="2">
    <location>
        <begin position="23"/>
        <end position="39"/>
    </location>
</feature>
<feature type="propeptide" id="PRO_0000461832" evidence="6">
    <location>
        <begin position="40"/>
        <end position="74"/>
    </location>
</feature>
<feature type="modified residue" description="Lysine amide; partial" evidence="2">
    <location>
        <position position="39"/>
    </location>
</feature>
<dbReference type="EMBL" id="EU252195">
    <property type="protein sequence ID" value="ACD11790.1"/>
    <property type="molecule type" value="mRNA"/>
</dbReference>
<dbReference type="GO" id="GO:0005576">
    <property type="term" value="C:extracellular region"/>
    <property type="evidence" value="ECO:0000314"/>
    <property type="project" value="UniProtKB"/>
</dbReference>
<dbReference type="GO" id="GO:0016020">
    <property type="term" value="C:membrane"/>
    <property type="evidence" value="ECO:0007669"/>
    <property type="project" value="UniProtKB-KW"/>
</dbReference>
<dbReference type="GO" id="GO:0044218">
    <property type="term" value="C:other organism cell membrane"/>
    <property type="evidence" value="ECO:0007669"/>
    <property type="project" value="UniProtKB-KW"/>
</dbReference>
<dbReference type="GO" id="GO:0050830">
    <property type="term" value="P:defense response to Gram-positive bacterium"/>
    <property type="evidence" value="ECO:0000314"/>
    <property type="project" value="UniProtKB"/>
</dbReference>
<dbReference type="GO" id="GO:0031640">
    <property type="term" value="P:killing of cells of another organism"/>
    <property type="evidence" value="ECO:0000314"/>
    <property type="project" value="UniProtKB"/>
</dbReference>
<accession>C0HL59</accession>
<accession>A0A0U1SPC4</accession>
<evidence type="ECO:0000255" key="1"/>
<evidence type="ECO:0000269" key="2">
    <source>
    </source>
</evidence>
<evidence type="ECO:0000303" key="3">
    <source>
    </source>
</evidence>
<evidence type="ECO:0000303" key="4">
    <source>
    </source>
</evidence>
<evidence type="ECO:0000305" key="5"/>
<evidence type="ECO:0000305" key="6">
    <source>
    </source>
</evidence>
<evidence type="ECO:0000305" key="7">
    <source>
    </source>
</evidence>
<evidence type="ECO:0000312" key="8">
    <source>
        <dbReference type="EMBL" id="ACD11790.1"/>
    </source>
</evidence>
<keyword id="KW-0027">Amidation</keyword>
<keyword id="KW-0044">Antibiotic</keyword>
<keyword id="KW-0929">Antimicrobial</keyword>
<keyword id="KW-0903">Direct protein sequencing</keyword>
<keyword id="KW-0472">Membrane</keyword>
<keyword id="KW-0964">Secreted</keyword>
<keyword id="KW-0732">Signal</keyword>
<keyword id="KW-1052">Target cell membrane</keyword>
<keyword id="KW-1053">Target membrane</keyword>
<name>NDB4A_ISOMC</name>
<protein>
    <recommendedName>
        <fullName evidence="3">Peptide Im-4</fullName>
        <shortName evidence="4">Im4</shortName>
    </recommendedName>
</protein>
<organism>
    <name type="scientific">Isometrus maculatus</name>
    <name type="common">Lesser brown scorpion</name>
    <name type="synonym">Scorpio maculatus</name>
    <dbReference type="NCBI Taxonomy" id="497827"/>
    <lineage>
        <taxon>Eukaryota</taxon>
        <taxon>Metazoa</taxon>
        <taxon>Ecdysozoa</taxon>
        <taxon>Arthropoda</taxon>
        <taxon>Chelicerata</taxon>
        <taxon>Arachnida</taxon>
        <taxon>Scorpiones</taxon>
        <taxon>Buthida</taxon>
        <taxon>Buthoidea</taxon>
        <taxon>Buthidae</taxon>
        <taxon>Isometrus</taxon>
    </lineage>
</organism>
<comment type="function">
    <text evidence="2">Antimicrobial peptide that probably forms pores in target membranes. Has antibacterial activity against Gram-positive bacteria S.aureus NBRC 13276 (MIC=5-10 uM) and B.subtilis NBRC 3009 (MIC=2.5-5 uM) but not against Gram-negative bacterium E.coli NBRC 3972.</text>
</comment>
<comment type="subcellular location">
    <subcellularLocation>
        <location evidence="2">Secreted</location>
    </subcellularLocation>
    <subcellularLocation>
        <location evidence="6">Target cell membrane</location>
    </subcellularLocation>
</comment>
<comment type="tissue specificity">
    <text evidence="6">Expressed by the venom gland.</text>
</comment>
<comment type="domain">
    <text evidence="7">Amphipathic and cationic peptide with an alpha-helical structure.</text>
</comment>
<comment type="mass spectrometry">
    <text>Amidated.</text>
</comment>
<comment type="mass spectrometry"/>
<comment type="miscellaneous">
    <text evidence="6">Fragments comprising residues 4-17 and 5-17 have been detected in venom but it is unclear whether they have a physiological role or are simply due to degradation.</text>
</comment>
<comment type="similarity">
    <text evidence="5">Belongs to the non-disulfide-bridged peptide (NDBP) superfamily. Short antimicrobial peptide (group 4) family.</text>
</comment>
<sequence>MKFQYLLAIFMIVLVVTDHCQAFIGMIPGLIGGLISAIKGRRRRQLEARYEPQQRNFRKREIDFEKLFANMPDY</sequence>
<proteinExistence type="evidence at protein level"/>